<feature type="chain" id="PRO_1000130546" description="L-threonine 3-dehydrogenase">
    <location>
        <begin position="1"/>
        <end position="341"/>
    </location>
</feature>
<feature type="active site" description="Charge relay system" evidence="1">
    <location>
        <position position="40"/>
    </location>
</feature>
<feature type="active site" description="Charge relay system" evidence="1">
    <location>
        <position position="43"/>
    </location>
</feature>
<feature type="binding site" evidence="1">
    <location>
        <position position="38"/>
    </location>
    <ligand>
        <name>Zn(2+)</name>
        <dbReference type="ChEBI" id="CHEBI:29105"/>
        <label>1</label>
        <note>catalytic</note>
    </ligand>
</feature>
<feature type="binding site" evidence="1">
    <location>
        <position position="63"/>
    </location>
    <ligand>
        <name>Zn(2+)</name>
        <dbReference type="ChEBI" id="CHEBI:29105"/>
        <label>1</label>
        <note>catalytic</note>
    </ligand>
</feature>
<feature type="binding site" evidence="1">
    <location>
        <position position="64"/>
    </location>
    <ligand>
        <name>Zn(2+)</name>
        <dbReference type="ChEBI" id="CHEBI:29105"/>
        <label>1</label>
        <note>catalytic</note>
    </ligand>
</feature>
<feature type="binding site" evidence="1">
    <location>
        <position position="93"/>
    </location>
    <ligand>
        <name>Zn(2+)</name>
        <dbReference type="ChEBI" id="CHEBI:29105"/>
        <label>2</label>
    </ligand>
</feature>
<feature type="binding site" evidence="1">
    <location>
        <position position="96"/>
    </location>
    <ligand>
        <name>Zn(2+)</name>
        <dbReference type="ChEBI" id="CHEBI:29105"/>
        <label>2</label>
    </ligand>
</feature>
<feature type="binding site" evidence="1">
    <location>
        <position position="99"/>
    </location>
    <ligand>
        <name>Zn(2+)</name>
        <dbReference type="ChEBI" id="CHEBI:29105"/>
        <label>2</label>
    </ligand>
</feature>
<feature type="binding site" evidence="1">
    <location>
        <position position="107"/>
    </location>
    <ligand>
        <name>Zn(2+)</name>
        <dbReference type="ChEBI" id="CHEBI:29105"/>
        <label>2</label>
    </ligand>
</feature>
<feature type="binding site" evidence="1">
    <location>
        <position position="175"/>
    </location>
    <ligand>
        <name>NAD(+)</name>
        <dbReference type="ChEBI" id="CHEBI:57540"/>
    </ligand>
</feature>
<feature type="binding site" evidence="1">
    <location>
        <position position="195"/>
    </location>
    <ligand>
        <name>NAD(+)</name>
        <dbReference type="ChEBI" id="CHEBI:57540"/>
    </ligand>
</feature>
<feature type="binding site" evidence="1">
    <location>
        <position position="200"/>
    </location>
    <ligand>
        <name>NAD(+)</name>
        <dbReference type="ChEBI" id="CHEBI:57540"/>
    </ligand>
</feature>
<feature type="binding site" evidence="1">
    <location>
        <begin position="262"/>
        <end position="264"/>
    </location>
    <ligand>
        <name>NAD(+)</name>
        <dbReference type="ChEBI" id="CHEBI:57540"/>
    </ligand>
</feature>
<feature type="binding site" evidence="1">
    <location>
        <begin position="286"/>
        <end position="287"/>
    </location>
    <ligand>
        <name>NAD(+)</name>
        <dbReference type="ChEBI" id="CHEBI:57540"/>
    </ligand>
</feature>
<feature type="site" description="Important for catalytic activity for the proton relay mechanism but does not participate directly in the coordination of zinc atom" evidence="1">
    <location>
        <position position="148"/>
    </location>
</feature>
<keyword id="KW-0963">Cytoplasm</keyword>
<keyword id="KW-0479">Metal-binding</keyword>
<keyword id="KW-0520">NAD</keyword>
<keyword id="KW-0560">Oxidoreductase</keyword>
<keyword id="KW-0862">Zinc</keyword>
<gene>
    <name evidence="1" type="primary">tdh</name>
    <name type="ordered locus">ECIAI39_4137</name>
</gene>
<sequence>MKALSKLKAEEGIWMTDVPVPELGHNDLLIKIRKTAICGTDVHIYNWDEWSQKTIPVPMVVGHEYVGEVVGIGQEVKGFKIGDRVSGEGHITCGHCRNCRGGRTHLCRNTIGVGVNRPGCFAEYLVIPAFNAFKIPDNISDDLASIFDPFGNAVHTALSFDLVGEDVLVSGAGPIGIMAAAVAKHVGARNVVITDVNEYRLELARKMGITRAVNVAKENLNDVMTELGMTEGFDVGLEMSGAPPAFRTMLDTMNHGGRIAMLGIPPSDMSIDWTKVIFKGLFIKGIYGREMFETWYKMAALIQSGLDLSPIITHRFSIDDFQKGFDAMRSGQSGKVILSWD</sequence>
<name>TDH_ECO7I</name>
<reference key="1">
    <citation type="journal article" date="2009" name="PLoS Genet.">
        <title>Organised genome dynamics in the Escherichia coli species results in highly diverse adaptive paths.</title>
        <authorList>
            <person name="Touchon M."/>
            <person name="Hoede C."/>
            <person name="Tenaillon O."/>
            <person name="Barbe V."/>
            <person name="Baeriswyl S."/>
            <person name="Bidet P."/>
            <person name="Bingen E."/>
            <person name="Bonacorsi S."/>
            <person name="Bouchier C."/>
            <person name="Bouvet O."/>
            <person name="Calteau A."/>
            <person name="Chiapello H."/>
            <person name="Clermont O."/>
            <person name="Cruveiller S."/>
            <person name="Danchin A."/>
            <person name="Diard M."/>
            <person name="Dossat C."/>
            <person name="Karoui M.E."/>
            <person name="Frapy E."/>
            <person name="Garry L."/>
            <person name="Ghigo J.M."/>
            <person name="Gilles A.M."/>
            <person name="Johnson J."/>
            <person name="Le Bouguenec C."/>
            <person name="Lescat M."/>
            <person name="Mangenot S."/>
            <person name="Martinez-Jehanne V."/>
            <person name="Matic I."/>
            <person name="Nassif X."/>
            <person name="Oztas S."/>
            <person name="Petit M.A."/>
            <person name="Pichon C."/>
            <person name="Rouy Z."/>
            <person name="Ruf C.S."/>
            <person name="Schneider D."/>
            <person name="Tourret J."/>
            <person name="Vacherie B."/>
            <person name="Vallenet D."/>
            <person name="Medigue C."/>
            <person name="Rocha E.P.C."/>
            <person name="Denamur E."/>
        </authorList>
    </citation>
    <scope>NUCLEOTIDE SEQUENCE [LARGE SCALE GENOMIC DNA]</scope>
    <source>
        <strain>IAI39 / ExPEC</strain>
    </source>
</reference>
<organism>
    <name type="scientific">Escherichia coli O7:K1 (strain IAI39 / ExPEC)</name>
    <dbReference type="NCBI Taxonomy" id="585057"/>
    <lineage>
        <taxon>Bacteria</taxon>
        <taxon>Pseudomonadati</taxon>
        <taxon>Pseudomonadota</taxon>
        <taxon>Gammaproteobacteria</taxon>
        <taxon>Enterobacterales</taxon>
        <taxon>Enterobacteriaceae</taxon>
        <taxon>Escherichia</taxon>
    </lineage>
</organism>
<dbReference type="EC" id="1.1.1.103" evidence="1"/>
<dbReference type="EMBL" id="CU928164">
    <property type="protein sequence ID" value="CAR20245.1"/>
    <property type="molecule type" value="Genomic_DNA"/>
</dbReference>
<dbReference type="RefSeq" id="WP_000646018.1">
    <property type="nucleotide sequence ID" value="NC_011750.1"/>
</dbReference>
<dbReference type="RefSeq" id="YP_002410014.1">
    <property type="nucleotide sequence ID" value="NC_011750.1"/>
</dbReference>
<dbReference type="SMR" id="B7NPC5"/>
<dbReference type="STRING" id="585057.ECIAI39_4137"/>
<dbReference type="KEGG" id="ect:ECIAI39_4137"/>
<dbReference type="PATRIC" id="fig|585057.6.peg.4288"/>
<dbReference type="HOGENOM" id="CLU_026673_11_0_6"/>
<dbReference type="UniPathway" id="UPA00046">
    <property type="reaction ID" value="UER00505"/>
</dbReference>
<dbReference type="Proteomes" id="UP000000749">
    <property type="component" value="Chromosome"/>
</dbReference>
<dbReference type="GO" id="GO:0005737">
    <property type="term" value="C:cytoplasm"/>
    <property type="evidence" value="ECO:0007669"/>
    <property type="project" value="UniProtKB-SubCell"/>
</dbReference>
<dbReference type="GO" id="GO:0008743">
    <property type="term" value="F:L-threonine 3-dehydrogenase activity"/>
    <property type="evidence" value="ECO:0007669"/>
    <property type="project" value="UniProtKB-UniRule"/>
</dbReference>
<dbReference type="GO" id="GO:0008270">
    <property type="term" value="F:zinc ion binding"/>
    <property type="evidence" value="ECO:0007669"/>
    <property type="project" value="UniProtKB-UniRule"/>
</dbReference>
<dbReference type="GO" id="GO:0019518">
    <property type="term" value="P:L-threonine catabolic process to glycine"/>
    <property type="evidence" value="ECO:0007669"/>
    <property type="project" value="UniProtKB-UniPathway"/>
</dbReference>
<dbReference type="FunFam" id="3.40.50.720:FF:000059">
    <property type="entry name" value="L-threonine 3-dehydrogenase"/>
    <property type="match status" value="1"/>
</dbReference>
<dbReference type="Gene3D" id="3.90.180.10">
    <property type="entry name" value="Medium-chain alcohol dehydrogenases, catalytic domain"/>
    <property type="match status" value="1"/>
</dbReference>
<dbReference type="Gene3D" id="3.40.50.720">
    <property type="entry name" value="NAD(P)-binding Rossmann-like Domain"/>
    <property type="match status" value="1"/>
</dbReference>
<dbReference type="HAMAP" id="MF_00627">
    <property type="entry name" value="Thr_dehydrog"/>
    <property type="match status" value="1"/>
</dbReference>
<dbReference type="InterPro" id="IPR013149">
    <property type="entry name" value="ADH-like_C"/>
</dbReference>
<dbReference type="InterPro" id="IPR013154">
    <property type="entry name" value="ADH-like_N"/>
</dbReference>
<dbReference type="InterPro" id="IPR002328">
    <property type="entry name" value="ADH_Zn_CS"/>
</dbReference>
<dbReference type="InterPro" id="IPR011032">
    <property type="entry name" value="GroES-like_sf"/>
</dbReference>
<dbReference type="InterPro" id="IPR004627">
    <property type="entry name" value="L-Threonine_3-DHase"/>
</dbReference>
<dbReference type="InterPro" id="IPR036291">
    <property type="entry name" value="NAD(P)-bd_dom_sf"/>
</dbReference>
<dbReference type="InterPro" id="IPR020843">
    <property type="entry name" value="PKS_ER"/>
</dbReference>
<dbReference type="InterPro" id="IPR050129">
    <property type="entry name" value="Zn_alcohol_dh"/>
</dbReference>
<dbReference type="NCBIfam" id="NF003808">
    <property type="entry name" value="PRK05396.1"/>
    <property type="match status" value="1"/>
</dbReference>
<dbReference type="NCBIfam" id="TIGR00692">
    <property type="entry name" value="tdh"/>
    <property type="match status" value="1"/>
</dbReference>
<dbReference type="PANTHER" id="PTHR43401">
    <property type="entry name" value="L-THREONINE 3-DEHYDROGENASE"/>
    <property type="match status" value="1"/>
</dbReference>
<dbReference type="PANTHER" id="PTHR43401:SF2">
    <property type="entry name" value="L-THREONINE 3-DEHYDROGENASE"/>
    <property type="match status" value="1"/>
</dbReference>
<dbReference type="Pfam" id="PF08240">
    <property type="entry name" value="ADH_N"/>
    <property type="match status" value="1"/>
</dbReference>
<dbReference type="Pfam" id="PF00107">
    <property type="entry name" value="ADH_zinc_N"/>
    <property type="match status" value="1"/>
</dbReference>
<dbReference type="SMART" id="SM00829">
    <property type="entry name" value="PKS_ER"/>
    <property type="match status" value="1"/>
</dbReference>
<dbReference type="SUPFAM" id="SSF50129">
    <property type="entry name" value="GroES-like"/>
    <property type="match status" value="1"/>
</dbReference>
<dbReference type="SUPFAM" id="SSF51735">
    <property type="entry name" value="NAD(P)-binding Rossmann-fold domains"/>
    <property type="match status" value="1"/>
</dbReference>
<dbReference type="PROSITE" id="PS00059">
    <property type="entry name" value="ADH_ZINC"/>
    <property type="match status" value="1"/>
</dbReference>
<proteinExistence type="inferred from homology"/>
<accession>B7NPC5</accession>
<comment type="function">
    <text evidence="1">Catalyzes the NAD(+)-dependent oxidation of L-threonine to 2-amino-3-ketobutyrate.</text>
</comment>
<comment type="catalytic activity">
    <reaction evidence="1">
        <text>L-threonine + NAD(+) = (2S)-2-amino-3-oxobutanoate + NADH + H(+)</text>
        <dbReference type="Rhea" id="RHEA:13161"/>
        <dbReference type="ChEBI" id="CHEBI:15378"/>
        <dbReference type="ChEBI" id="CHEBI:57540"/>
        <dbReference type="ChEBI" id="CHEBI:57926"/>
        <dbReference type="ChEBI" id="CHEBI:57945"/>
        <dbReference type="ChEBI" id="CHEBI:78948"/>
        <dbReference type="EC" id="1.1.1.103"/>
    </reaction>
</comment>
<comment type="cofactor">
    <cofactor evidence="1">
        <name>Zn(2+)</name>
        <dbReference type="ChEBI" id="CHEBI:29105"/>
    </cofactor>
    <text evidence="1">Binds 2 Zn(2+) ions per subunit.</text>
</comment>
<comment type="pathway">
    <text evidence="1">Amino-acid degradation; L-threonine degradation via oxydo-reductase pathway; glycine from L-threonine: step 1/2.</text>
</comment>
<comment type="subunit">
    <text evidence="1">Homotetramer.</text>
</comment>
<comment type="subcellular location">
    <subcellularLocation>
        <location evidence="1">Cytoplasm</location>
    </subcellularLocation>
</comment>
<comment type="similarity">
    <text evidence="1">Belongs to the zinc-containing alcohol dehydrogenase family.</text>
</comment>
<protein>
    <recommendedName>
        <fullName evidence="1">L-threonine 3-dehydrogenase</fullName>
        <shortName evidence="1">TDH</shortName>
        <ecNumber evidence="1">1.1.1.103</ecNumber>
    </recommendedName>
</protein>
<evidence type="ECO:0000255" key="1">
    <source>
        <dbReference type="HAMAP-Rule" id="MF_00627"/>
    </source>
</evidence>